<organism>
    <name type="scientific">Bifidobacterium adolescentis (strain ATCC 15703 / DSM 20083 / NCTC 11814 / E194a)</name>
    <dbReference type="NCBI Taxonomy" id="367928"/>
    <lineage>
        <taxon>Bacteria</taxon>
        <taxon>Bacillati</taxon>
        <taxon>Actinomycetota</taxon>
        <taxon>Actinomycetes</taxon>
        <taxon>Bifidobacteriales</taxon>
        <taxon>Bifidobacteriaceae</taxon>
        <taxon>Bifidobacterium</taxon>
    </lineage>
</organism>
<accession>A1A3P5</accession>
<dbReference type="EMBL" id="AP009256">
    <property type="protein sequence ID" value="BAF40328.1"/>
    <property type="molecule type" value="Genomic_DNA"/>
</dbReference>
<dbReference type="RefSeq" id="WP_011743845.1">
    <property type="nucleotide sequence ID" value="NC_008618.1"/>
</dbReference>
<dbReference type="SMR" id="A1A3P5"/>
<dbReference type="STRING" id="367928.BAD_1547"/>
<dbReference type="PaxDb" id="1680-BADO_1461"/>
<dbReference type="GeneID" id="4556255"/>
<dbReference type="KEGG" id="bad:BAD_1547"/>
<dbReference type="HOGENOM" id="CLU_005965_2_1_11"/>
<dbReference type="Proteomes" id="UP000008702">
    <property type="component" value="Chromosome"/>
</dbReference>
<dbReference type="GO" id="GO:0005524">
    <property type="term" value="F:ATP binding"/>
    <property type="evidence" value="ECO:0007669"/>
    <property type="project" value="UniProtKB-UniRule"/>
</dbReference>
<dbReference type="GO" id="GO:0140662">
    <property type="term" value="F:ATP-dependent protein folding chaperone"/>
    <property type="evidence" value="ECO:0007669"/>
    <property type="project" value="InterPro"/>
</dbReference>
<dbReference type="GO" id="GO:0051082">
    <property type="term" value="F:unfolded protein binding"/>
    <property type="evidence" value="ECO:0007669"/>
    <property type="project" value="InterPro"/>
</dbReference>
<dbReference type="CDD" id="cd10234">
    <property type="entry name" value="ASKHA_NBD_HSP70_DnaK-like"/>
    <property type="match status" value="1"/>
</dbReference>
<dbReference type="FunFam" id="2.60.34.10:FF:000014">
    <property type="entry name" value="Chaperone protein DnaK HSP70"/>
    <property type="match status" value="1"/>
</dbReference>
<dbReference type="FunFam" id="1.20.1270.10:FF:000001">
    <property type="entry name" value="Molecular chaperone DnaK"/>
    <property type="match status" value="1"/>
</dbReference>
<dbReference type="FunFam" id="3.30.420.40:FF:000071">
    <property type="entry name" value="Molecular chaperone DnaK"/>
    <property type="match status" value="1"/>
</dbReference>
<dbReference type="FunFam" id="3.90.640.10:FF:000003">
    <property type="entry name" value="Molecular chaperone DnaK"/>
    <property type="match status" value="1"/>
</dbReference>
<dbReference type="Gene3D" id="1.20.1270.10">
    <property type="match status" value="1"/>
</dbReference>
<dbReference type="Gene3D" id="3.30.420.40">
    <property type="match status" value="2"/>
</dbReference>
<dbReference type="Gene3D" id="3.90.640.10">
    <property type="entry name" value="Actin, Chain A, domain 4"/>
    <property type="match status" value="1"/>
</dbReference>
<dbReference type="Gene3D" id="2.60.34.10">
    <property type="entry name" value="Substrate Binding Domain Of DNAk, Chain A, domain 1"/>
    <property type="match status" value="1"/>
</dbReference>
<dbReference type="HAMAP" id="MF_00332">
    <property type="entry name" value="DnaK"/>
    <property type="match status" value="1"/>
</dbReference>
<dbReference type="InterPro" id="IPR043129">
    <property type="entry name" value="ATPase_NBD"/>
</dbReference>
<dbReference type="InterPro" id="IPR012725">
    <property type="entry name" value="Chaperone_DnaK"/>
</dbReference>
<dbReference type="InterPro" id="IPR018181">
    <property type="entry name" value="Heat_shock_70_CS"/>
</dbReference>
<dbReference type="InterPro" id="IPR029048">
    <property type="entry name" value="HSP70_C_sf"/>
</dbReference>
<dbReference type="InterPro" id="IPR029047">
    <property type="entry name" value="HSP70_peptide-bd_sf"/>
</dbReference>
<dbReference type="InterPro" id="IPR013126">
    <property type="entry name" value="Hsp_70_fam"/>
</dbReference>
<dbReference type="NCBIfam" id="NF001413">
    <property type="entry name" value="PRK00290.1"/>
    <property type="match status" value="1"/>
</dbReference>
<dbReference type="NCBIfam" id="TIGR02350">
    <property type="entry name" value="prok_dnaK"/>
    <property type="match status" value="1"/>
</dbReference>
<dbReference type="PANTHER" id="PTHR19375">
    <property type="entry name" value="HEAT SHOCK PROTEIN 70KDA"/>
    <property type="match status" value="1"/>
</dbReference>
<dbReference type="Pfam" id="PF00012">
    <property type="entry name" value="HSP70"/>
    <property type="match status" value="1"/>
</dbReference>
<dbReference type="PRINTS" id="PR00301">
    <property type="entry name" value="HEATSHOCK70"/>
</dbReference>
<dbReference type="SUPFAM" id="SSF53067">
    <property type="entry name" value="Actin-like ATPase domain"/>
    <property type="match status" value="2"/>
</dbReference>
<dbReference type="SUPFAM" id="SSF100934">
    <property type="entry name" value="Heat shock protein 70kD (HSP70), C-terminal subdomain"/>
    <property type="match status" value="1"/>
</dbReference>
<dbReference type="SUPFAM" id="SSF100920">
    <property type="entry name" value="Heat shock protein 70kD (HSP70), peptide-binding domain"/>
    <property type="match status" value="1"/>
</dbReference>
<dbReference type="PROSITE" id="PS00297">
    <property type="entry name" value="HSP70_1"/>
    <property type="match status" value="1"/>
</dbReference>
<dbReference type="PROSITE" id="PS00329">
    <property type="entry name" value="HSP70_2"/>
    <property type="match status" value="1"/>
</dbReference>
<dbReference type="PROSITE" id="PS01036">
    <property type="entry name" value="HSP70_3"/>
    <property type="match status" value="1"/>
</dbReference>
<evidence type="ECO:0000255" key="1">
    <source>
        <dbReference type="HAMAP-Rule" id="MF_00332"/>
    </source>
</evidence>
<evidence type="ECO:0000256" key="2">
    <source>
        <dbReference type="SAM" id="MobiDB-lite"/>
    </source>
</evidence>
<keyword id="KW-0067">ATP-binding</keyword>
<keyword id="KW-0143">Chaperone</keyword>
<keyword id="KW-0547">Nucleotide-binding</keyword>
<keyword id="KW-0597">Phosphoprotein</keyword>
<keyword id="KW-1185">Reference proteome</keyword>
<keyword id="KW-0346">Stress response</keyword>
<proteinExistence type="inferred from homology"/>
<comment type="function">
    <text evidence="1">Acts as a chaperone.</text>
</comment>
<comment type="induction">
    <text evidence="1">By stress conditions e.g. heat shock.</text>
</comment>
<comment type="similarity">
    <text evidence="1">Belongs to the heat shock protein 70 family.</text>
</comment>
<name>DNAK_BIFAA</name>
<protein>
    <recommendedName>
        <fullName evidence="1">Chaperone protein DnaK</fullName>
    </recommendedName>
    <alternativeName>
        <fullName evidence="1">HSP70</fullName>
    </alternativeName>
    <alternativeName>
        <fullName evidence="1">Heat shock 70 kDa protein</fullName>
    </alternativeName>
    <alternativeName>
        <fullName evidence="1">Heat shock protein 70</fullName>
    </alternativeName>
</protein>
<sequence length="626" mass="66840">MGRAVGIDLGTTNSCIATLEGGQPTVIVNAEGARTTPSVVAFSKSGEILVGEVAKRQAVTNVDRTISSVKRHMGTDWTVEIDGKKWTPQEISAQVLMKLKRDAEAYLGEPVTDAVITCPAYFNDAQRQATKDAGTIAGLNVLRIINEPTAAALAYGLEKGKEDERILVFDLGGGTFDVSLLEIGKDDDGFSTIQVQATNGDNHLGGDDWDQKIIDWLVGEVKNKYGVDLSKDKIALQRLKEAAEQAKKELSSSTSTSISMQYLAMTPDGTPVHLDETLTRAHFEEMTSDLLGRCRTPFNNVLRDAGIGVSDIDHVVLVGGSTRMPAVKELVKELTGGKEANQSVNPDEVVAVGAAVQSGVIKGDRKDVLLIDVTPLSLGIETKGGIMTKLIERNTAIPTKRSEVFSTAEDNQPSVLIQVYQGEREFARDNKPLGTFELTGIAPAPRGVPQIEVTFDIDANGIVHVSAKDKGTGKEQSMTITGGSGLPKDEIDRMVKEAEAHEAEDKKRKEDAETRNQAESFAYQTEKLVNDNKDKLSDDVAKEVTDKVNELKEALKGEDIEKIKSAQTELMTSAQKIGQALYAQQGAADAAGAAGAAGAGAAGSASNGSDDDVVDAEVVDDDKDNK</sequence>
<gene>
    <name evidence="1" type="primary">dnaK</name>
    <name type="ordered locus">BAD_1547</name>
</gene>
<feature type="chain" id="PRO_1000059514" description="Chaperone protein DnaK">
    <location>
        <begin position="1"/>
        <end position="626"/>
    </location>
</feature>
<feature type="region of interest" description="Disordered" evidence="2">
    <location>
        <begin position="469"/>
        <end position="488"/>
    </location>
</feature>
<feature type="region of interest" description="Disordered" evidence="2">
    <location>
        <begin position="498"/>
        <end position="517"/>
    </location>
</feature>
<feature type="region of interest" description="Disordered" evidence="2">
    <location>
        <begin position="583"/>
        <end position="626"/>
    </location>
</feature>
<feature type="compositionally biased region" description="Basic and acidic residues" evidence="2">
    <location>
        <begin position="498"/>
        <end position="516"/>
    </location>
</feature>
<feature type="compositionally biased region" description="Acidic residues" evidence="2">
    <location>
        <begin position="609"/>
        <end position="626"/>
    </location>
</feature>
<feature type="modified residue" description="Phosphothreonine; by autocatalysis" evidence="1">
    <location>
        <position position="175"/>
    </location>
</feature>
<reference key="1">
    <citation type="submission" date="2006-12" db="EMBL/GenBank/DDBJ databases">
        <title>Bifidobacterium adolescentis complete genome sequence.</title>
        <authorList>
            <person name="Suzuki T."/>
            <person name="Tsuda Y."/>
            <person name="Kanou N."/>
            <person name="Inoue T."/>
            <person name="Kumazaki K."/>
            <person name="Nagano S."/>
            <person name="Hirai S."/>
            <person name="Tanaka K."/>
            <person name="Watanabe K."/>
        </authorList>
    </citation>
    <scope>NUCLEOTIDE SEQUENCE [LARGE SCALE GENOMIC DNA]</scope>
    <source>
        <strain>ATCC 15703 / DSM 20083 / NCTC 11814 / E194a</strain>
    </source>
</reference>